<evidence type="ECO:0000250" key="1"/>
<evidence type="ECO:0000305" key="2"/>
<proteinExistence type="evidence at transcript level"/>
<gene>
    <name type="primary">TRAPPC3</name>
    <name type="ORF">RCJMB04_30c23</name>
</gene>
<feature type="chain" id="PRO_0000211575" description="Trafficking protein particle complex subunit 3">
    <location>
        <begin position="1"/>
        <end position="180"/>
    </location>
</feature>
<feature type="lipid moiety-binding region" description="S-palmitoyl cysteine" evidence="1">
    <location>
        <position position="68"/>
    </location>
</feature>
<reference key="1">
    <citation type="journal article" date="2005" name="Genome Biol.">
        <title>Full-length cDNAs from chicken bursal lymphocytes to facilitate gene function analysis.</title>
        <authorList>
            <person name="Caldwell R.B."/>
            <person name="Kierzek A.M."/>
            <person name="Arakawa H."/>
            <person name="Bezzubov Y."/>
            <person name="Zaim J."/>
            <person name="Fiedler P."/>
            <person name="Kutter S."/>
            <person name="Blagodatski A."/>
            <person name="Kostovska D."/>
            <person name="Koter M."/>
            <person name="Plachy J."/>
            <person name="Carninci P."/>
            <person name="Hayashizaki Y."/>
            <person name="Buerstedde J.-M."/>
        </authorList>
    </citation>
    <scope>NUCLEOTIDE SEQUENCE [LARGE SCALE MRNA]</scope>
    <source>
        <strain>CB</strain>
        <tissue>Bursa of Fabricius</tissue>
    </source>
</reference>
<dbReference type="EMBL" id="AJ720927">
    <property type="protein sequence ID" value="CAG32586.1"/>
    <property type="molecule type" value="mRNA"/>
</dbReference>
<dbReference type="RefSeq" id="NP_001008451.1">
    <property type="nucleotide sequence ID" value="NM_001008451.2"/>
</dbReference>
<dbReference type="SMR" id="Q5ZI57"/>
<dbReference type="FunCoup" id="Q5ZI57">
    <property type="interactions" value="2807"/>
</dbReference>
<dbReference type="STRING" id="9031.ENSGALP00000065707"/>
<dbReference type="PaxDb" id="9031-ENSGALP00000003580"/>
<dbReference type="GeneID" id="419625"/>
<dbReference type="KEGG" id="gga:419625"/>
<dbReference type="CTD" id="27095"/>
<dbReference type="VEuPathDB" id="HostDB:geneid_419625"/>
<dbReference type="eggNOG" id="KOG3330">
    <property type="taxonomic scope" value="Eukaryota"/>
</dbReference>
<dbReference type="HOGENOM" id="CLU_087110_0_0_1"/>
<dbReference type="InParanoid" id="Q5ZI57"/>
<dbReference type="OrthoDB" id="10262857at2759"/>
<dbReference type="PhylomeDB" id="Q5ZI57"/>
<dbReference type="TreeFam" id="TF300091"/>
<dbReference type="Reactome" id="R-GGA-204005">
    <property type="pathway name" value="COPII-mediated vesicle transport"/>
</dbReference>
<dbReference type="PRO" id="PR:Q5ZI57"/>
<dbReference type="Proteomes" id="UP000000539">
    <property type="component" value="Chromosome 23"/>
</dbReference>
<dbReference type="Bgee" id="ENSGALG00000002284">
    <property type="expression patterns" value="Expressed in spermatid and 14 other cell types or tissues"/>
</dbReference>
<dbReference type="GO" id="GO:0033106">
    <property type="term" value="C:cis-Golgi network membrane"/>
    <property type="evidence" value="ECO:0000318"/>
    <property type="project" value="GO_Central"/>
</dbReference>
<dbReference type="GO" id="GO:0005829">
    <property type="term" value="C:cytosol"/>
    <property type="evidence" value="ECO:0000318"/>
    <property type="project" value="GO_Central"/>
</dbReference>
<dbReference type="GO" id="GO:0005783">
    <property type="term" value="C:endoplasmic reticulum"/>
    <property type="evidence" value="ECO:0007669"/>
    <property type="project" value="UniProtKB-SubCell"/>
</dbReference>
<dbReference type="GO" id="GO:0030008">
    <property type="term" value="C:TRAPP complex"/>
    <property type="evidence" value="ECO:0000318"/>
    <property type="project" value="GO_Central"/>
</dbReference>
<dbReference type="GO" id="GO:0006888">
    <property type="term" value="P:endoplasmic reticulum to Golgi vesicle-mediated transport"/>
    <property type="evidence" value="ECO:0000318"/>
    <property type="project" value="GO_Central"/>
</dbReference>
<dbReference type="GO" id="GO:0006891">
    <property type="term" value="P:intra-Golgi vesicle-mediated transport"/>
    <property type="evidence" value="ECO:0000318"/>
    <property type="project" value="GO_Central"/>
</dbReference>
<dbReference type="CDD" id="cd14942">
    <property type="entry name" value="TRAPPC3_bet3"/>
    <property type="match status" value="1"/>
</dbReference>
<dbReference type="FunFam" id="3.30.1380.20:FF:000003">
    <property type="entry name" value="Trafficking protein particle complex subunit"/>
    <property type="match status" value="1"/>
</dbReference>
<dbReference type="Gene3D" id="3.30.1380.20">
    <property type="entry name" value="Trafficking protein particle complex subunit 3"/>
    <property type="match status" value="1"/>
</dbReference>
<dbReference type="InterPro" id="IPR016721">
    <property type="entry name" value="Bet3"/>
</dbReference>
<dbReference type="InterPro" id="IPR024096">
    <property type="entry name" value="NO_sig/Golgi_transp_ligand-bd"/>
</dbReference>
<dbReference type="InterPro" id="IPR007194">
    <property type="entry name" value="TRAPP_component"/>
</dbReference>
<dbReference type="PANTHER" id="PTHR13048">
    <property type="entry name" value="TRAFFICKING PROTEIN PARTICLE COMPLEX SUBUNIT 3"/>
    <property type="match status" value="1"/>
</dbReference>
<dbReference type="Pfam" id="PF04051">
    <property type="entry name" value="TRAPP"/>
    <property type="match status" value="1"/>
</dbReference>
<dbReference type="PIRSF" id="PIRSF018293">
    <property type="entry name" value="TRAPP_I_complex_Bet3"/>
    <property type="match status" value="1"/>
</dbReference>
<dbReference type="SUPFAM" id="SSF111126">
    <property type="entry name" value="Ligand-binding domain in the NO signalling and Golgi transport"/>
    <property type="match status" value="1"/>
</dbReference>
<accession>Q5ZI57</accession>
<keyword id="KW-0256">Endoplasmic reticulum</keyword>
<keyword id="KW-0931">ER-Golgi transport</keyword>
<keyword id="KW-0333">Golgi apparatus</keyword>
<keyword id="KW-0449">Lipoprotein</keyword>
<keyword id="KW-0564">Palmitate</keyword>
<keyword id="KW-1185">Reference proteome</keyword>
<keyword id="KW-0813">Transport</keyword>
<sequence>MSRQAGRGTESKKMNSELFTLTYGALVTQLCKDYENDEDVNKQLDKMGYNIGVRLIEDFLARSNVGRCHDFRETADVIAKIAFKMYLGITPSITNWSPGGDEFSLILENNPLVDFVELPDNHSSLIYSNLLCGVLRGALEMVQMAVDVKFVQDTLKGDSVTEIRMKFIRRIEDNLPAGEE</sequence>
<comment type="function">
    <text evidence="1">May play a role in vesicular transport from endoplasmic reticulum to Golgi.</text>
</comment>
<comment type="subunit">
    <text evidence="1">Homodimer. Part of the multisubunit TRAPP (transport protein particle) complex (By similarity).</text>
</comment>
<comment type="subcellular location">
    <subcellularLocation>
        <location evidence="1">Golgi apparatus</location>
        <location evidence="1">cis-Golgi network</location>
    </subcellularLocation>
    <subcellularLocation>
        <location evidence="1">Endoplasmic reticulum</location>
    </subcellularLocation>
</comment>
<comment type="similarity">
    <text evidence="2">Belongs to the TRAPP small subunits family. BET3 subfamily.</text>
</comment>
<organism>
    <name type="scientific">Gallus gallus</name>
    <name type="common">Chicken</name>
    <dbReference type="NCBI Taxonomy" id="9031"/>
    <lineage>
        <taxon>Eukaryota</taxon>
        <taxon>Metazoa</taxon>
        <taxon>Chordata</taxon>
        <taxon>Craniata</taxon>
        <taxon>Vertebrata</taxon>
        <taxon>Euteleostomi</taxon>
        <taxon>Archelosauria</taxon>
        <taxon>Archosauria</taxon>
        <taxon>Dinosauria</taxon>
        <taxon>Saurischia</taxon>
        <taxon>Theropoda</taxon>
        <taxon>Coelurosauria</taxon>
        <taxon>Aves</taxon>
        <taxon>Neognathae</taxon>
        <taxon>Galloanserae</taxon>
        <taxon>Galliformes</taxon>
        <taxon>Phasianidae</taxon>
        <taxon>Phasianinae</taxon>
        <taxon>Gallus</taxon>
    </lineage>
</organism>
<name>TPPC3_CHICK</name>
<protein>
    <recommendedName>
        <fullName>Trafficking protein particle complex subunit 3</fullName>
    </recommendedName>
</protein>